<feature type="chain" id="PRO_0000363055" description="S-adenosylmethionine synthase 2">
    <location>
        <begin position="1"/>
        <end position="393"/>
    </location>
</feature>
<feature type="binding site" evidence="3">
    <location>
        <position position="9"/>
    </location>
    <ligand>
        <name>Mg(2+)</name>
        <dbReference type="ChEBI" id="CHEBI:18420"/>
    </ligand>
</feature>
<feature type="binding site" description="in other chain" evidence="4">
    <location>
        <position position="15"/>
    </location>
    <ligand>
        <name>ATP</name>
        <dbReference type="ChEBI" id="CHEBI:30616"/>
        <note>ligand shared between two neighboring subunits</note>
    </ligand>
</feature>
<feature type="binding site" evidence="2">
    <location>
        <position position="43"/>
    </location>
    <ligand>
        <name>K(+)</name>
        <dbReference type="ChEBI" id="CHEBI:29103"/>
    </ligand>
</feature>
<feature type="binding site" description="in other chain" evidence="2">
    <location>
        <position position="56"/>
    </location>
    <ligand>
        <name>L-methionine</name>
        <dbReference type="ChEBI" id="CHEBI:57844"/>
        <note>ligand shared between two neighboring subunits</note>
    </ligand>
</feature>
<feature type="binding site" description="in other chain" evidence="2">
    <location>
        <position position="99"/>
    </location>
    <ligand>
        <name>L-methionine</name>
        <dbReference type="ChEBI" id="CHEBI:57844"/>
        <note>ligand shared between two neighboring subunits</note>
    </ligand>
</feature>
<feature type="binding site" description="in other chain" evidence="4">
    <location>
        <begin position="167"/>
        <end position="169"/>
    </location>
    <ligand>
        <name>ATP</name>
        <dbReference type="ChEBI" id="CHEBI:30616"/>
        <note>ligand shared between two neighboring subunits</note>
    </ligand>
</feature>
<feature type="binding site" description="in other chain" evidence="4">
    <location>
        <begin position="235"/>
        <end position="238"/>
    </location>
    <ligand>
        <name>ATP</name>
        <dbReference type="ChEBI" id="CHEBI:30616"/>
        <note>ligand shared between two neighboring subunits</note>
    </ligand>
</feature>
<feature type="binding site" description="in other chain" evidence="4">
    <location>
        <position position="246"/>
    </location>
    <ligand>
        <name>ATP</name>
        <dbReference type="ChEBI" id="CHEBI:30616"/>
        <note>ligand shared between two neighboring subunits</note>
    </ligand>
</feature>
<feature type="binding site" evidence="2">
    <location>
        <position position="246"/>
    </location>
    <ligand>
        <name>L-methionine</name>
        <dbReference type="ChEBI" id="CHEBI:57844"/>
        <note>ligand shared between two neighboring subunits</note>
    </ligand>
</feature>
<feature type="binding site" description="in other chain" evidence="2">
    <location>
        <begin position="252"/>
        <end position="253"/>
    </location>
    <ligand>
        <name>ATP</name>
        <dbReference type="ChEBI" id="CHEBI:30616"/>
        <note>ligand shared between two neighboring subunits</note>
    </ligand>
</feature>
<feature type="binding site" evidence="2">
    <location>
        <position position="269"/>
    </location>
    <ligand>
        <name>ATP</name>
        <dbReference type="ChEBI" id="CHEBI:30616"/>
        <note>ligand shared between two neighboring subunits</note>
    </ligand>
</feature>
<feature type="binding site" evidence="2">
    <location>
        <position position="273"/>
    </location>
    <ligand>
        <name>ATP</name>
        <dbReference type="ChEBI" id="CHEBI:30616"/>
        <note>ligand shared between two neighboring subunits</note>
    </ligand>
</feature>
<feature type="binding site" evidence="3">
    <location>
        <position position="277"/>
    </location>
    <ligand>
        <name>ATP</name>
        <dbReference type="ChEBI" id="CHEBI:30616"/>
        <note>ligand shared between two neighboring subunits</note>
    </ligand>
</feature>
<feature type="binding site" description="in other chain" evidence="2">
    <location>
        <position position="277"/>
    </location>
    <ligand>
        <name>L-methionine</name>
        <dbReference type="ChEBI" id="CHEBI:57844"/>
        <note>ligand shared between two neighboring subunits</note>
    </ligand>
</feature>
<feature type="sequence conflict" description="In Ref. 2; CAN75334/CAN75687." evidence="6" ref="2">
    <original>T</original>
    <variation>S</variation>
    <location>
        <position position="322"/>
    </location>
</feature>
<gene>
    <name type="primary">METK2</name>
    <name type="ordered locus">VIT_05s0020g00670</name>
    <name type="ORF">GSVIVT00019707001</name>
    <name type="ORF">LOC100244176</name>
    <name type="ORF">VITISV_002362</name>
    <name type="ORF">VITISV_034977</name>
</gene>
<organism>
    <name type="scientific">Vitis vinifera</name>
    <name type="common">Grape</name>
    <dbReference type="NCBI Taxonomy" id="29760"/>
    <lineage>
        <taxon>Eukaryota</taxon>
        <taxon>Viridiplantae</taxon>
        <taxon>Streptophyta</taxon>
        <taxon>Embryophyta</taxon>
        <taxon>Tracheophyta</taxon>
        <taxon>Spermatophyta</taxon>
        <taxon>Magnoliopsida</taxon>
        <taxon>eudicotyledons</taxon>
        <taxon>Gunneridae</taxon>
        <taxon>Pentapetalae</taxon>
        <taxon>rosids</taxon>
        <taxon>Vitales</taxon>
        <taxon>Vitaceae</taxon>
        <taxon>Viteae</taxon>
        <taxon>Vitis</taxon>
    </lineage>
</organism>
<comment type="function">
    <text evidence="5">Catalyzes the formation of S-adenosylmethionine from methionine and ATP. The reaction comprises two steps that are both catalyzed by the same enzyme: formation of S-adenosylmethionine (AdoMet) and triphosphate, and subsequent hydrolysis of the triphosphate.</text>
</comment>
<comment type="catalytic activity">
    <reaction evidence="5">
        <text>L-methionine + ATP + H2O = S-adenosyl-L-methionine + phosphate + diphosphate</text>
        <dbReference type="Rhea" id="RHEA:21080"/>
        <dbReference type="ChEBI" id="CHEBI:15377"/>
        <dbReference type="ChEBI" id="CHEBI:30616"/>
        <dbReference type="ChEBI" id="CHEBI:33019"/>
        <dbReference type="ChEBI" id="CHEBI:43474"/>
        <dbReference type="ChEBI" id="CHEBI:57844"/>
        <dbReference type="ChEBI" id="CHEBI:59789"/>
        <dbReference type="EC" id="2.5.1.6"/>
    </reaction>
</comment>
<comment type="cofactor">
    <cofactor evidence="5">
        <name>Mn(2+)</name>
        <dbReference type="ChEBI" id="CHEBI:29035"/>
    </cofactor>
    <cofactor evidence="5">
        <name>Mg(2+)</name>
        <dbReference type="ChEBI" id="CHEBI:18420"/>
    </cofactor>
    <cofactor evidence="5">
        <name>Co(2+)</name>
        <dbReference type="ChEBI" id="CHEBI:48828"/>
    </cofactor>
    <text evidence="3 5">Binds 2 divalent ions per subunit. The metal ions interact primarily with the substrate (By similarity). Can utilize magnesium, manganese or cobalt (in vitro) (By similarity).</text>
</comment>
<comment type="cofactor">
    <cofactor evidence="5">
        <name>K(+)</name>
        <dbReference type="ChEBI" id="CHEBI:29103"/>
    </cofactor>
    <text evidence="3">Binds 1 potassium ion per subunit. The potassium ion interacts primarily with the substrate (By similarity).</text>
</comment>
<comment type="pathway">
    <text evidence="5">Amino-acid biosynthesis; S-adenosyl-L-methionine biosynthesis; S-adenosyl-L-methionine from L-methionine: step 1/1.</text>
</comment>
<comment type="subunit">
    <text evidence="1">Homotetramer.</text>
</comment>
<comment type="subcellular location">
    <subcellularLocation>
        <location evidence="1">Cytoplasm</location>
    </subcellularLocation>
</comment>
<comment type="similarity">
    <text evidence="6">Belongs to the AdoMet synthase family.</text>
</comment>
<comment type="sequence caution" evidence="6">
    <conflict type="erroneous gene model prediction">
        <sequence resource="EMBL-CDS" id="CCB50287"/>
    </conflict>
</comment>
<dbReference type="EC" id="2.5.1.6" evidence="5"/>
<dbReference type="EMBL" id="FN595749">
    <property type="protein sequence ID" value="CCB50287.1"/>
    <property type="status" value="ALT_SEQ"/>
    <property type="molecule type" value="Genomic_DNA"/>
</dbReference>
<dbReference type="EMBL" id="FN597023">
    <property type="status" value="NOT_ANNOTATED_CDS"/>
    <property type="molecule type" value="Genomic_DNA"/>
</dbReference>
<dbReference type="EMBL" id="AM427059">
    <property type="protein sequence ID" value="CAN75687.1"/>
    <property type="molecule type" value="Genomic_DNA"/>
</dbReference>
<dbReference type="EMBL" id="AM483606">
    <property type="protein sequence ID" value="CAN75334.1"/>
    <property type="molecule type" value="Genomic_DNA"/>
</dbReference>
<dbReference type="RefSeq" id="NP_001384793.1">
    <property type="nucleotide sequence ID" value="NM_001397864.1"/>
</dbReference>
<dbReference type="RefSeq" id="XP_002266358.1">
    <property type="nucleotide sequence ID" value="XM_002266322.4"/>
</dbReference>
<dbReference type="SMR" id="A7NVX9"/>
<dbReference type="FunCoup" id="A7NVX9">
    <property type="interactions" value="2527"/>
</dbReference>
<dbReference type="STRING" id="29760.A7NVX9"/>
<dbReference type="PaxDb" id="29760-VIT_05s0020g00670.t01"/>
<dbReference type="EnsemblPlants" id="Vitvi05g00242_t001">
    <property type="protein sequence ID" value="Vitvi05g00242_P001"/>
    <property type="gene ID" value="Vitvi05g00242"/>
</dbReference>
<dbReference type="GeneID" id="100244176"/>
<dbReference type="Gramene" id="Vitvi05g00242_t001">
    <property type="protein sequence ID" value="Vitvi05g00242_P001"/>
    <property type="gene ID" value="Vitvi05g00242"/>
</dbReference>
<dbReference type="eggNOG" id="KOG1506">
    <property type="taxonomic scope" value="Eukaryota"/>
</dbReference>
<dbReference type="HOGENOM" id="CLU_041802_1_1_1"/>
<dbReference type="InParanoid" id="A7NVX9"/>
<dbReference type="OrthoDB" id="5852090at2759"/>
<dbReference type="UniPathway" id="UPA00315">
    <property type="reaction ID" value="UER00080"/>
</dbReference>
<dbReference type="Proteomes" id="UP000009183">
    <property type="component" value="Chromosome 5"/>
</dbReference>
<dbReference type="Proteomes" id="UP000009183">
    <property type="component" value="Chromosome 5, unordered"/>
</dbReference>
<dbReference type="ExpressionAtlas" id="A7NVX9">
    <property type="expression patterns" value="baseline and differential"/>
</dbReference>
<dbReference type="GO" id="GO:0005829">
    <property type="term" value="C:cytosol"/>
    <property type="evidence" value="ECO:0000318"/>
    <property type="project" value="GO_Central"/>
</dbReference>
<dbReference type="GO" id="GO:0005524">
    <property type="term" value="F:ATP binding"/>
    <property type="evidence" value="ECO:0007669"/>
    <property type="project" value="UniProtKB-KW"/>
</dbReference>
<dbReference type="GO" id="GO:0046872">
    <property type="term" value="F:metal ion binding"/>
    <property type="evidence" value="ECO:0007669"/>
    <property type="project" value="UniProtKB-KW"/>
</dbReference>
<dbReference type="GO" id="GO:0004478">
    <property type="term" value="F:methionine adenosyltransferase activity"/>
    <property type="evidence" value="ECO:0000318"/>
    <property type="project" value="GO_Central"/>
</dbReference>
<dbReference type="GO" id="GO:0006730">
    <property type="term" value="P:one-carbon metabolic process"/>
    <property type="evidence" value="ECO:0007669"/>
    <property type="project" value="UniProtKB-KW"/>
</dbReference>
<dbReference type="GO" id="GO:0006556">
    <property type="term" value="P:S-adenosylmethionine biosynthetic process"/>
    <property type="evidence" value="ECO:0000318"/>
    <property type="project" value="GO_Central"/>
</dbReference>
<dbReference type="CDD" id="cd18079">
    <property type="entry name" value="S-AdoMet_synt"/>
    <property type="match status" value="1"/>
</dbReference>
<dbReference type="FunFam" id="3.30.300.10:FF:000003">
    <property type="entry name" value="S-adenosylmethionine synthase"/>
    <property type="match status" value="1"/>
</dbReference>
<dbReference type="FunFam" id="3.30.300.10:FF:000004">
    <property type="entry name" value="S-adenosylmethionine synthase"/>
    <property type="match status" value="1"/>
</dbReference>
<dbReference type="FunFam" id="3.30.300.10:FF:000011">
    <property type="entry name" value="S-adenosylmethionine synthase"/>
    <property type="match status" value="1"/>
</dbReference>
<dbReference type="FunFam" id="3.30.300.10:FF:000021">
    <property type="entry name" value="S-adenosylmethionine synthetase 1"/>
    <property type="match status" value="1"/>
</dbReference>
<dbReference type="Gene3D" id="3.30.300.10">
    <property type="match status" value="3"/>
</dbReference>
<dbReference type="HAMAP" id="MF_00086">
    <property type="entry name" value="S_AdoMet_synth1"/>
    <property type="match status" value="1"/>
</dbReference>
<dbReference type="InterPro" id="IPR022631">
    <property type="entry name" value="ADOMET_SYNTHASE_CS"/>
</dbReference>
<dbReference type="InterPro" id="IPR022630">
    <property type="entry name" value="S-AdoMet_synt_C"/>
</dbReference>
<dbReference type="InterPro" id="IPR022629">
    <property type="entry name" value="S-AdoMet_synt_central"/>
</dbReference>
<dbReference type="InterPro" id="IPR022628">
    <property type="entry name" value="S-AdoMet_synt_N"/>
</dbReference>
<dbReference type="InterPro" id="IPR002133">
    <property type="entry name" value="S-AdoMet_synthetase"/>
</dbReference>
<dbReference type="InterPro" id="IPR022636">
    <property type="entry name" value="S-AdoMet_synthetase_sfam"/>
</dbReference>
<dbReference type="NCBIfam" id="TIGR01034">
    <property type="entry name" value="metK"/>
    <property type="match status" value="1"/>
</dbReference>
<dbReference type="PANTHER" id="PTHR11964">
    <property type="entry name" value="S-ADENOSYLMETHIONINE SYNTHETASE"/>
    <property type="match status" value="1"/>
</dbReference>
<dbReference type="Pfam" id="PF02773">
    <property type="entry name" value="S-AdoMet_synt_C"/>
    <property type="match status" value="1"/>
</dbReference>
<dbReference type="Pfam" id="PF02772">
    <property type="entry name" value="S-AdoMet_synt_M"/>
    <property type="match status" value="1"/>
</dbReference>
<dbReference type="Pfam" id="PF00438">
    <property type="entry name" value="S-AdoMet_synt_N"/>
    <property type="match status" value="1"/>
</dbReference>
<dbReference type="PIRSF" id="PIRSF000497">
    <property type="entry name" value="MAT"/>
    <property type="match status" value="1"/>
</dbReference>
<dbReference type="SUPFAM" id="SSF55973">
    <property type="entry name" value="S-adenosylmethionine synthetase"/>
    <property type="match status" value="3"/>
</dbReference>
<dbReference type="PROSITE" id="PS00376">
    <property type="entry name" value="ADOMET_SYNTHASE_1"/>
    <property type="match status" value="1"/>
</dbReference>
<dbReference type="PROSITE" id="PS00377">
    <property type="entry name" value="ADOMET_SYNTHASE_2"/>
    <property type="match status" value="1"/>
</dbReference>
<keyword id="KW-0067">ATP-binding</keyword>
<keyword id="KW-0170">Cobalt</keyword>
<keyword id="KW-0963">Cytoplasm</keyword>
<keyword id="KW-0460">Magnesium</keyword>
<keyword id="KW-0479">Metal-binding</keyword>
<keyword id="KW-0547">Nucleotide-binding</keyword>
<keyword id="KW-0554">One-carbon metabolism</keyword>
<keyword id="KW-0630">Potassium</keyword>
<keyword id="KW-1185">Reference proteome</keyword>
<keyword id="KW-0808">Transferase</keyword>
<name>METK2_VITVI</name>
<evidence type="ECO:0000250" key="1"/>
<evidence type="ECO:0000250" key="2">
    <source>
        <dbReference type="UniProtKB" id="P0A817"/>
    </source>
</evidence>
<evidence type="ECO:0000250" key="3">
    <source>
        <dbReference type="UniProtKB" id="P13444"/>
    </source>
</evidence>
<evidence type="ECO:0000250" key="4">
    <source>
        <dbReference type="UniProtKB" id="Q00266"/>
    </source>
</evidence>
<evidence type="ECO:0000250" key="5">
    <source>
        <dbReference type="UniProtKB" id="Q96551"/>
    </source>
</evidence>
<evidence type="ECO:0000305" key="6"/>
<proteinExistence type="inferred from homology"/>
<reference key="1">
    <citation type="journal article" date="2007" name="Nature">
        <title>The grapevine genome sequence suggests ancestral hexaploidization in major angiosperm phyla.</title>
        <authorList>
            <person name="Jaillon O."/>
            <person name="Aury J.-M."/>
            <person name="Noel B."/>
            <person name="Policriti A."/>
            <person name="Clepet C."/>
            <person name="Casagrande A."/>
            <person name="Choisne N."/>
            <person name="Aubourg S."/>
            <person name="Vitulo N."/>
            <person name="Jubin C."/>
            <person name="Vezzi A."/>
            <person name="Legeai F."/>
            <person name="Hugueney P."/>
            <person name="Dasilva C."/>
            <person name="Horner D."/>
            <person name="Mica E."/>
            <person name="Jublot D."/>
            <person name="Poulain J."/>
            <person name="Bruyere C."/>
            <person name="Billault A."/>
            <person name="Segurens B."/>
            <person name="Gouyvenoux M."/>
            <person name="Ugarte E."/>
            <person name="Cattonaro F."/>
            <person name="Anthouard V."/>
            <person name="Vico V."/>
            <person name="Del Fabbro C."/>
            <person name="Alaux M."/>
            <person name="Di Gaspero G."/>
            <person name="Dumas V."/>
            <person name="Felice N."/>
            <person name="Paillard S."/>
            <person name="Juman I."/>
            <person name="Moroldo M."/>
            <person name="Scalabrin S."/>
            <person name="Canaguier A."/>
            <person name="Le Clainche I."/>
            <person name="Malacrida G."/>
            <person name="Durand E."/>
            <person name="Pesole G."/>
            <person name="Laucou V."/>
            <person name="Chatelet P."/>
            <person name="Merdinoglu D."/>
            <person name="Delledonne M."/>
            <person name="Pezzotti M."/>
            <person name="Lecharny A."/>
            <person name="Scarpelli C."/>
            <person name="Artiguenave F."/>
            <person name="Pe M.E."/>
            <person name="Valle G."/>
            <person name="Morgante M."/>
            <person name="Caboche M."/>
            <person name="Adam-Blondon A.-F."/>
            <person name="Weissenbach J."/>
            <person name="Quetier F."/>
            <person name="Wincker P."/>
        </authorList>
    </citation>
    <scope>NUCLEOTIDE SEQUENCE [LARGE SCALE GENOMIC DNA]</scope>
    <source>
        <strain>cv. Pinot noir / PN40024</strain>
    </source>
</reference>
<reference key="2">
    <citation type="journal article" date="2007" name="PLoS ONE">
        <title>A high quality draft consensus sequence of the genome of a heterozygous grapevine variety.</title>
        <authorList>
            <person name="Velasco R."/>
            <person name="Zharkikh A."/>
            <person name="Troggio M."/>
            <person name="Cartwright D.A."/>
            <person name="Cestaro A."/>
            <person name="Pruss D."/>
            <person name="Pindo M."/>
            <person name="FitzGerald L.M."/>
            <person name="Vezzulli S."/>
            <person name="Reid J."/>
            <person name="Malacarne G."/>
            <person name="Iliev D."/>
            <person name="Coppola G."/>
            <person name="Wardell B."/>
            <person name="Micheletti D."/>
            <person name="Macalma T."/>
            <person name="Facci M."/>
            <person name="Mitchell J.T."/>
            <person name="Perazzolli M."/>
            <person name="Eldredge G."/>
            <person name="Gatto P."/>
            <person name="Oyzerski R."/>
            <person name="Moretto M."/>
            <person name="Gutin N."/>
            <person name="Stefanini M."/>
            <person name="Chen Y."/>
            <person name="Segala C."/>
            <person name="Davenport C."/>
            <person name="Dematte L."/>
            <person name="Mraz A."/>
            <person name="Battilana J."/>
            <person name="Stormo K."/>
            <person name="Costa F."/>
            <person name="Tao Q."/>
            <person name="Si-Ammour A."/>
            <person name="Harkins T."/>
            <person name="Lackey A."/>
            <person name="Perbost C."/>
            <person name="Taillon B."/>
            <person name="Stella A."/>
            <person name="Solovyev V."/>
            <person name="Fawcett J.A."/>
            <person name="Sterck L."/>
            <person name="Vandepoele K."/>
            <person name="Grando S.M."/>
            <person name="Toppo S."/>
            <person name="Moser C."/>
            <person name="Lanchbury J."/>
            <person name="Bogden R."/>
            <person name="Skolnick M."/>
            <person name="Sgaramella V."/>
            <person name="Bhatnagar S.K."/>
            <person name="Fontana P."/>
            <person name="Gutin A."/>
            <person name="Van de Peer Y."/>
            <person name="Salamini F."/>
            <person name="Viola R."/>
        </authorList>
    </citation>
    <scope>NUCLEOTIDE SEQUENCE [LARGE SCALE GENOMIC DNA]</scope>
    <source>
        <strain>cv. Pinot noir</strain>
    </source>
</reference>
<protein>
    <recommendedName>
        <fullName>S-adenosylmethionine synthase 2</fullName>
        <shortName>AdoMet synthase 2</shortName>
        <ecNumber evidence="5">2.5.1.6</ecNumber>
    </recommendedName>
    <alternativeName>
        <fullName>Methionine adenosyltransferase 2</fullName>
        <shortName>MAT 2</shortName>
    </alternativeName>
</protein>
<sequence length="393" mass="43114">METFLFTSESVNEGHPDKLCDQISDAVLDACLQQDPDSKVACETCTKTNMVMVFGEITTKANVDYEKIVRDTCREIGFVSDDVGLDADNCKVLVNIEQQSPDIAQGVHGHLTKRPEEIGAGDQGHMFGYATDETPELMPLSHVLATKLGARLTEVRKNGTCPWLRPDGKTQVTVEYHNDGGARVPIRVHTVLISTQHDETVTNDEIAADLKEHVIKPVIPEKYLDEKTIFHLNPSGRFVIGGPHGDAGLTGRKIIIDTYGGWGAHGGGAFSGKDPTKVDRSGAYIVRQAAKSIVANGLARRCIVQVSYAIGVPEPLSVFVDTYGTGKIPDREILKIVKENFDFRPGMISINLDLKRGGNGRFLKTAAYGHFGRDDPDFTWEVVKPLKWEKTQA</sequence>
<accession>A7NVX9</accession>
<accession>A5AHS0</accession>
<accession>A5C620</accession>
<accession>F6HE35</accession>